<evidence type="ECO:0000255" key="1">
    <source>
        <dbReference type="HAMAP-Rule" id="MF_00053"/>
    </source>
</evidence>
<evidence type="ECO:0000255" key="2">
    <source>
        <dbReference type="PROSITE-ProRule" id="PRU01319"/>
    </source>
</evidence>
<proteinExistence type="inferred from homology"/>
<feature type="chain" id="PRO_1000031237" description="Ribonuclease HIII">
    <location>
        <begin position="1"/>
        <end position="312"/>
    </location>
</feature>
<feature type="domain" description="RNase H type-2" evidence="2">
    <location>
        <begin position="95"/>
        <end position="311"/>
    </location>
</feature>
<feature type="binding site" evidence="1">
    <location>
        <position position="101"/>
    </location>
    <ligand>
        <name>a divalent metal cation</name>
        <dbReference type="ChEBI" id="CHEBI:60240"/>
    </ligand>
</feature>
<feature type="binding site" evidence="1">
    <location>
        <position position="102"/>
    </location>
    <ligand>
        <name>a divalent metal cation</name>
        <dbReference type="ChEBI" id="CHEBI:60240"/>
    </ligand>
</feature>
<feature type="binding site" evidence="1">
    <location>
        <position position="206"/>
    </location>
    <ligand>
        <name>a divalent metal cation</name>
        <dbReference type="ChEBI" id="CHEBI:60240"/>
    </ligand>
</feature>
<comment type="function">
    <text evidence="1">Endonuclease that specifically degrades the RNA of RNA-DNA hybrids.</text>
</comment>
<comment type="catalytic activity">
    <reaction evidence="1">
        <text>Endonucleolytic cleavage to 5'-phosphomonoester.</text>
        <dbReference type="EC" id="3.1.26.4"/>
    </reaction>
</comment>
<comment type="cofactor">
    <cofactor evidence="1">
        <name>Mn(2+)</name>
        <dbReference type="ChEBI" id="CHEBI:29035"/>
    </cofactor>
    <cofactor evidence="1">
        <name>Mg(2+)</name>
        <dbReference type="ChEBI" id="CHEBI:18420"/>
    </cofactor>
    <text evidence="1">Manganese or magnesium. Binds 1 divalent metal ion per monomer in the absence of substrate. May bind a second metal ion after substrate binding.</text>
</comment>
<comment type="subcellular location">
    <subcellularLocation>
        <location evidence="1">Cytoplasm</location>
    </subcellularLocation>
</comment>
<comment type="similarity">
    <text evidence="1">Belongs to the RNase HII family. RnhC subfamily.</text>
</comment>
<reference key="1">
    <citation type="book" date="2006" name="Gram positive pathogens, 2nd edition">
        <title>The Staphylococcus aureus NCTC 8325 genome.</title>
        <editorList>
            <person name="Fischetti V."/>
            <person name="Novick R."/>
            <person name="Ferretti J."/>
            <person name="Portnoy D."/>
            <person name="Rood J."/>
        </editorList>
        <authorList>
            <person name="Gillaspy A.F."/>
            <person name="Worrell V."/>
            <person name="Orvis J."/>
            <person name="Roe B.A."/>
            <person name="Dyer D.W."/>
            <person name="Iandolo J.J."/>
        </authorList>
    </citation>
    <scope>NUCLEOTIDE SEQUENCE [LARGE SCALE GENOMIC DNA]</scope>
    <source>
        <strain>NCTC 8325 / PS 47</strain>
    </source>
</reference>
<dbReference type="EC" id="3.1.26.4" evidence="1"/>
<dbReference type="EMBL" id="CP000253">
    <property type="protein sequence ID" value="ABD30209.1"/>
    <property type="molecule type" value="Genomic_DNA"/>
</dbReference>
<dbReference type="RefSeq" id="WP_001284258.1">
    <property type="nucleotide sequence ID" value="NZ_LS483365.1"/>
</dbReference>
<dbReference type="RefSeq" id="YP_499639.1">
    <property type="nucleotide sequence ID" value="NC_007795.1"/>
</dbReference>
<dbReference type="SMR" id="Q2FZD7"/>
<dbReference type="STRING" id="93061.SAOUHSC_01095"/>
<dbReference type="PaxDb" id="1280-SAXN108_1135"/>
<dbReference type="GeneID" id="3920737"/>
<dbReference type="KEGG" id="sao:SAOUHSC_01095"/>
<dbReference type="PATRIC" id="fig|93061.5.peg.1003"/>
<dbReference type="eggNOG" id="COG1039">
    <property type="taxonomic scope" value="Bacteria"/>
</dbReference>
<dbReference type="HOGENOM" id="CLU_059546_1_0_9"/>
<dbReference type="OrthoDB" id="9777935at2"/>
<dbReference type="PRO" id="PR:Q2FZD7"/>
<dbReference type="Proteomes" id="UP000008816">
    <property type="component" value="Chromosome"/>
</dbReference>
<dbReference type="GO" id="GO:0005737">
    <property type="term" value="C:cytoplasm"/>
    <property type="evidence" value="ECO:0007669"/>
    <property type="project" value="UniProtKB-SubCell"/>
</dbReference>
<dbReference type="GO" id="GO:0032299">
    <property type="term" value="C:ribonuclease H2 complex"/>
    <property type="evidence" value="ECO:0000318"/>
    <property type="project" value="GO_Central"/>
</dbReference>
<dbReference type="GO" id="GO:0000287">
    <property type="term" value="F:magnesium ion binding"/>
    <property type="evidence" value="ECO:0007669"/>
    <property type="project" value="UniProtKB-UniRule"/>
</dbReference>
<dbReference type="GO" id="GO:0003723">
    <property type="term" value="F:RNA binding"/>
    <property type="evidence" value="ECO:0007669"/>
    <property type="project" value="InterPro"/>
</dbReference>
<dbReference type="GO" id="GO:0004523">
    <property type="term" value="F:RNA-DNA hybrid ribonuclease activity"/>
    <property type="evidence" value="ECO:0000318"/>
    <property type="project" value="GO_Central"/>
</dbReference>
<dbReference type="GO" id="GO:0043137">
    <property type="term" value="P:DNA replication, removal of RNA primer"/>
    <property type="evidence" value="ECO:0000318"/>
    <property type="project" value="GO_Central"/>
</dbReference>
<dbReference type="GO" id="GO:0006298">
    <property type="term" value="P:mismatch repair"/>
    <property type="evidence" value="ECO:0000318"/>
    <property type="project" value="GO_Central"/>
</dbReference>
<dbReference type="CDD" id="cd06590">
    <property type="entry name" value="RNase_HII_bacteria_HIII_like"/>
    <property type="match status" value="1"/>
</dbReference>
<dbReference type="CDD" id="cd14796">
    <property type="entry name" value="RNAse_HIII_N"/>
    <property type="match status" value="1"/>
</dbReference>
<dbReference type="FunFam" id="3.30.420.10:FF:000047">
    <property type="entry name" value="Ribonuclease HIII"/>
    <property type="match status" value="1"/>
</dbReference>
<dbReference type="Gene3D" id="3.30.420.10">
    <property type="entry name" value="Ribonuclease H-like superfamily/Ribonuclease H"/>
    <property type="match status" value="1"/>
</dbReference>
<dbReference type="Gene3D" id="3.30.310.10">
    <property type="entry name" value="TATA-Binding Protein"/>
    <property type="match status" value="1"/>
</dbReference>
<dbReference type="HAMAP" id="MF_00053">
    <property type="entry name" value="RNase_HIII"/>
    <property type="match status" value="1"/>
</dbReference>
<dbReference type="InterPro" id="IPR001352">
    <property type="entry name" value="RNase_HII/HIII"/>
</dbReference>
<dbReference type="InterPro" id="IPR024567">
    <property type="entry name" value="RNase_HII/HIII_dom"/>
</dbReference>
<dbReference type="InterPro" id="IPR004641">
    <property type="entry name" value="RNase_HIII"/>
</dbReference>
<dbReference type="InterPro" id="IPR024568">
    <property type="entry name" value="RNase_HIII_N"/>
</dbReference>
<dbReference type="InterPro" id="IPR012337">
    <property type="entry name" value="RNaseH-like_sf"/>
</dbReference>
<dbReference type="InterPro" id="IPR036397">
    <property type="entry name" value="RNaseH_sf"/>
</dbReference>
<dbReference type="InterPro" id="IPR012295">
    <property type="entry name" value="TBP_dom_sf"/>
</dbReference>
<dbReference type="NCBIfam" id="TIGR00716">
    <property type="entry name" value="rnhC"/>
    <property type="match status" value="1"/>
</dbReference>
<dbReference type="PANTHER" id="PTHR10954:SF23">
    <property type="entry name" value="RIBONUCLEASE"/>
    <property type="match status" value="1"/>
</dbReference>
<dbReference type="PANTHER" id="PTHR10954">
    <property type="entry name" value="RIBONUCLEASE H2 SUBUNIT A"/>
    <property type="match status" value="1"/>
</dbReference>
<dbReference type="Pfam" id="PF11858">
    <property type="entry name" value="DUF3378"/>
    <property type="match status" value="1"/>
</dbReference>
<dbReference type="Pfam" id="PF01351">
    <property type="entry name" value="RNase_HII"/>
    <property type="match status" value="1"/>
</dbReference>
<dbReference type="PIRSF" id="PIRSF037748">
    <property type="entry name" value="RnhC"/>
    <property type="match status" value="1"/>
</dbReference>
<dbReference type="SUPFAM" id="SSF53098">
    <property type="entry name" value="Ribonuclease H-like"/>
    <property type="match status" value="1"/>
</dbReference>
<dbReference type="PROSITE" id="PS51975">
    <property type="entry name" value="RNASE_H_2"/>
    <property type="match status" value="1"/>
</dbReference>
<accession>Q2FZD7</accession>
<protein>
    <recommendedName>
        <fullName evidence="1">Ribonuclease HIII</fullName>
        <shortName evidence="1">RNase HIII</shortName>
        <ecNumber evidence="1">3.1.26.4</ecNumber>
    </recommendedName>
</protein>
<keyword id="KW-0963">Cytoplasm</keyword>
<keyword id="KW-0255">Endonuclease</keyword>
<keyword id="KW-0378">Hydrolase</keyword>
<keyword id="KW-0460">Magnesium</keyword>
<keyword id="KW-0479">Metal-binding</keyword>
<keyword id="KW-0540">Nuclease</keyword>
<keyword id="KW-1185">Reference proteome</keyword>
<name>RNH3_STAA8</name>
<organism>
    <name type="scientific">Staphylococcus aureus (strain NCTC 8325 / PS 47)</name>
    <dbReference type="NCBI Taxonomy" id="93061"/>
    <lineage>
        <taxon>Bacteria</taxon>
        <taxon>Bacillati</taxon>
        <taxon>Bacillota</taxon>
        <taxon>Bacilli</taxon>
        <taxon>Bacillales</taxon>
        <taxon>Staphylococcaceae</taxon>
        <taxon>Staphylococcus</taxon>
    </lineage>
</organism>
<gene>
    <name evidence="1" type="primary">rnhC</name>
    <name type="ordered locus">SAOUHSC_01095</name>
</gene>
<sequence length="312" mass="35055">MANIVFKLSDKDITTLMSRISFDTENLPQGMKARAKYQNTTVNIYQSGKVMFQGNHAEAVSEELLPQHSQLNTNKTKKKNMANSFLEQTLMYDQFNCIGSDEAGSGDYFGPLTVCAAFVTKEHVPILKTLGVDDSKKLTDTKIVELAEQLVTFIPHSLLTLHNEKYNIQQAKGWTQVKMKAALHNEAIKNVLEKIDSSQLDYIVIDQFAKREVYSHYALSDIPLPKKTKFETKGESKSLAIAVASIISRYAFVTYMDQISKNINMTIPKGAGAKVDVIAAKIIKKYGLSRLDTISKKHFKNREKAQKILKPL</sequence>